<organism>
    <name type="scientific">Bordetella parapertussis (strain 12822 / ATCC BAA-587 / NCTC 13253)</name>
    <dbReference type="NCBI Taxonomy" id="257311"/>
    <lineage>
        <taxon>Bacteria</taxon>
        <taxon>Pseudomonadati</taxon>
        <taxon>Pseudomonadota</taxon>
        <taxon>Betaproteobacteria</taxon>
        <taxon>Burkholderiales</taxon>
        <taxon>Alcaligenaceae</taxon>
        <taxon>Bordetella</taxon>
    </lineage>
</organism>
<gene>
    <name evidence="2" type="primary">gshB</name>
    <name type="synonym">gsh-II</name>
    <name type="ordered locus">BPP1965</name>
</gene>
<keyword id="KW-0067">ATP-binding</keyword>
<keyword id="KW-0317">Glutathione biosynthesis</keyword>
<keyword id="KW-0436">Ligase</keyword>
<keyword id="KW-0460">Magnesium</keyword>
<keyword id="KW-0464">Manganese</keyword>
<keyword id="KW-0479">Metal-binding</keyword>
<keyword id="KW-0547">Nucleotide-binding</keyword>
<sequence>MHVLFIIDPLPLLKAYKDSSVAMMQALQARGHTLSVALQGDLYIDAGEVRTRFAPIALRDGADLHGHDWWRETGAADEAPLARFDAVVMRKDPPFDMEYVYSTHLLEYAQQQGARVFNSGAAIRNHPEKLAITEFPDLTTPTLVTRDMGRIRAFHAAQGDVIVKPLDGMGGTGIFRLQRSEPNLNAILETLTDNGTRTIMAQRYIPEIVKGDKRILLIGGEPVPYSLARIPLAGETRGNLAAGGRGVAQPLSERDLHLARTVADRLAGRGLLLVGLDVIGDYITEVNVTSPTCFVEITEQTGFNVPEMFAVALESAAG</sequence>
<proteinExistence type="inferred from homology"/>
<comment type="catalytic activity">
    <reaction evidence="2">
        <text>gamma-L-glutamyl-L-cysteine + glycine + ATP = glutathione + ADP + phosphate + H(+)</text>
        <dbReference type="Rhea" id="RHEA:13557"/>
        <dbReference type="ChEBI" id="CHEBI:15378"/>
        <dbReference type="ChEBI" id="CHEBI:30616"/>
        <dbReference type="ChEBI" id="CHEBI:43474"/>
        <dbReference type="ChEBI" id="CHEBI:57305"/>
        <dbReference type="ChEBI" id="CHEBI:57925"/>
        <dbReference type="ChEBI" id="CHEBI:58173"/>
        <dbReference type="ChEBI" id="CHEBI:456216"/>
        <dbReference type="EC" id="6.3.2.3"/>
    </reaction>
</comment>
<comment type="cofactor">
    <cofactor evidence="1">
        <name>Mg(2+)</name>
        <dbReference type="ChEBI" id="CHEBI:18420"/>
    </cofactor>
    <cofactor evidence="1">
        <name>Mn(2+)</name>
        <dbReference type="ChEBI" id="CHEBI:29035"/>
    </cofactor>
    <text evidence="1">Binds 1 Mg(2+) or Mn(2+) ion per subunit.</text>
</comment>
<comment type="pathway">
    <text evidence="2">Sulfur metabolism; glutathione biosynthesis; glutathione from L-cysteine and L-glutamate: step 2/2.</text>
</comment>
<comment type="similarity">
    <text evidence="2">Belongs to the prokaryotic GSH synthase family.</text>
</comment>
<feature type="chain" id="PRO_0000197454" description="Glutathione synthetase">
    <location>
        <begin position="1"/>
        <end position="318"/>
    </location>
</feature>
<feature type="domain" description="ATP-grasp" evidence="2">
    <location>
        <begin position="129"/>
        <end position="314"/>
    </location>
</feature>
<feature type="binding site" evidence="2">
    <location>
        <begin position="155"/>
        <end position="211"/>
    </location>
    <ligand>
        <name>ATP</name>
        <dbReference type="ChEBI" id="CHEBI:30616"/>
    </ligand>
</feature>
<feature type="binding site" evidence="2">
    <location>
        <position position="285"/>
    </location>
    <ligand>
        <name>Mg(2+)</name>
        <dbReference type="ChEBI" id="CHEBI:18420"/>
    </ligand>
</feature>
<feature type="binding site" evidence="2">
    <location>
        <position position="287"/>
    </location>
    <ligand>
        <name>Mg(2+)</name>
        <dbReference type="ChEBI" id="CHEBI:18420"/>
    </ligand>
</feature>
<name>GSHB_BORPA</name>
<protein>
    <recommendedName>
        <fullName evidence="2">Glutathione synthetase</fullName>
        <ecNumber evidence="2">6.3.2.3</ecNumber>
    </recommendedName>
    <alternativeName>
        <fullName evidence="2">GSH synthetase</fullName>
        <shortName evidence="2">GSH-S</shortName>
        <shortName evidence="2">GSHase</shortName>
    </alternativeName>
    <alternativeName>
        <fullName evidence="2">Glutathione synthase</fullName>
    </alternativeName>
</protein>
<reference key="1">
    <citation type="journal article" date="2003" name="Nat. Genet.">
        <title>Comparative analysis of the genome sequences of Bordetella pertussis, Bordetella parapertussis and Bordetella bronchiseptica.</title>
        <authorList>
            <person name="Parkhill J."/>
            <person name="Sebaihia M."/>
            <person name="Preston A."/>
            <person name="Murphy L.D."/>
            <person name="Thomson N.R."/>
            <person name="Harris D.E."/>
            <person name="Holden M.T.G."/>
            <person name="Churcher C.M."/>
            <person name="Bentley S.D."/>
            <person name="Mungall K.L."/>
            <person name="Cerdeno-Tarraga A.-M."/>
            <person name="Temple L."/>
            <person name="James K.D."/>
            <person name="Harris B."/>
            <person name="Quail M.A."/>
            <person name="Achtman M."/>
            <person name="Atkin R."/>
            <person name="Baker S."/>
            <person name="Basham D."/>
            <person name="Bason N."/>
            <person name="Cherevach I."/>
            <person name="Chillingworth T."/>
            <person name="Collins M."/>
            <person name="Cronin A."/>
            <person name="Davis P."/>
            <person name="Doggett J."/>
            <person name="Feltwell T."/>
            <person name="Goble A."/>
            <person name="Hamlin N."/>
            <person name="Hauser H."/>
            <person name="Holroyd S."/>
            <person name="Jagels K."/>
            <person name="Leather S."/>
            <person name="Moule S."/>
            <person name="Norberczak H."/>
            <person name="O'Neil S."/>
            <person name="Ormond D."/>
            <person name="Price C."/>
            <person name="Rabbinowitsch E."/>
            <person name="Rutter S."/>
            <person name="Sanders M."/>
            <person name="Saunders D."/>
            <person name="Seeger K."/>
            <person name="Sharp S."/>
            <person name="Simmonds M."/>
            <person name="Skelton J."/>
            <person name="Squares R."/>
            <person name="Squares S."/>
            <person name="Stevens K."/>
            <person name="Unwin L."/>
            <person name="Whitehead S."/>
            <person name="Barrell B.G."/>
            <person name="Maskell D.J."/>
        </authorList>
    </citation>
    <scope>NUCLEOTIDE SEQUENCE [LARGE SCALE GENOMIC DNA]</scope>
    <source>
        <strain>12822 / ATCC BAA-587 / NCTC 13253</strain>
    </source>
</reference>
<dbReference type="EC" id="6.3.2.3" evidence="2"/>
<dbReference type="EMBL" id="BX640429">
    <property type="protein sequence ID" value="CAE37264.1"/>
    <property type="molecule type" value="Genomic_DNA"/>
</dbReference>
<dbReference type="RefSeq" id="WP_003812603.1">
    <property type="nucleotide sequence ID" value="NC_002928.3"/>
</dbReference>
<dbReference type="SMR" id="Q7W910"/>
<dbReference type="GeneID" id="93203737"/>
<dbReference type="KEGG" id="bpa:BPP1965"/>
<dbReference type="HOGENOM" id="CLU_068239_0_0_4"/>
<dbReference type="UniPathway" id="UPA00142">
    <property type="reaction ID" value="UER00210"/>
</dbReference>
<dbReference type="Proteomes" id="UP000001421">
    <property type="component" value="Chromosome"/>
</dbReference>
<dbReference type="GO" id="GO:0005737">
    <property type="term" value="C:cytoplasm"/>
    <property type="evidence" value="ECO:0007669"/>
    <property type="project" value="TreeGrafter"/>
</dbReference>
<dbReference type="GO" id="GO:0005524">
    <property type="term" value="F:ATP binding"/>
    <property type="evidence" value="ECO:0007669"/>
    <property type="project" value="UniProtKB-UniRule"/>
</dbReference>
<dbReference type="GO" id="GO:0004363">
    <property type="term" value="F:glutathione synthase activity"/>
    <property type="evidence" value="ECO:0007669"/>
    <property type="project" value="UniProtKB-UniRule"/>
</dbReference>
<dbReference type="GO" id="GO:0046872">
    <property type="term" value="F:metal ion binding"/>
    <property type="evidence" value="ECO:0007669"/>
    <property type="project" value="UniProtKB-KW"/>
</dbReference>
<dbReference type="FunFam" id="3.30.1490.20:FF:000009">
    <property type="entry name" value="Glutathione synthetase"/>
    <property type="match status" value="1"/>
</dbReference>
<dbReference type="Gene3D" id="3.40.50.20">
    <property type="match status" value="1"/>
</dbReference>
<dbReference type="Gene3D" id="3.30.1490.20">
    <property type="entry name" value="ATP-grasp fold, A domain"/>
    <property type="match status" value="1"/>
</dbReference>
<dbReference type="Gene3D" id="3.30.470.20">
    <property type="entry name" value="ATP-grasp fold, B domain"/>
    <property type="match status" value="1"/>
</dbReference>
<dbReference type="HAMAP" id="MF_00162">
    <property type="entry name" value="GSH_S"/>
    <property type="match status" value="1"/>
</dbReference>
<dbReference type="InterPro" id="IPR011761">
    <property type="entry name" value="ATP-grasp"/>
</dbReference>
<dbReference type="InterPro" id="IPR013815">
    <property type="entry name" value="ATP_grasp_subdomain_1"/>
</dbReference>
<dbReference type="InterPro" id="IPR006284">
    <property type="entry name" value="Glut_synth_pro"/>
</dbReference>
<dbReference type="InterPro" id="IPR004218">
    <property type="entry name" value="GSHS_ATP-bd"/>
</dbReference>
<dbReference type="InterPro" id="IPR004215">
    <property type="entry name" value="GSHS_N"/>
</dbReference>
<dbReference type="InterPro" id="IPR016185">
    <property type="entry name" value="PreATP-grasp_dom_sf"/>
</dbReference>
<dbReference type="NCBIfam" id="TIGR01380">
    <property type="entry name" value="glut_syn"/>
    <property type="match status" value="1"/>
</dbReference>
<dbReference type="NCBIfam" id="NF003573">
    <property type="entry name" value="PRK05246.1"/>
    <property type="match status" value="1"/>
</dbReference>
<dbReference type="PANTHER" id="PTHR21621:SF4">
    <property type="entry name" value="GLUTATHIONE SYNTHETASE"/>
    <property type="match status" value="1"/>
</dbReference>
<dbReference type="PANTHER" id="PTHR21621">
    <property type="entry name" value="RIBOSOMAL PROTEIN S6 MODIFICATION PROTEIN"/>
    <property type="match status" value="1"/>
</dbReference>
<dbReference type="Pfam" id="PF02955">
    <property type="entry name" value="GSH-S_ATP"/>
    <property type="match status" value="1"/>
</dbReference>
<dbReference type="Pfam" id="PF02951">
    <property type="entry name" value="GSH-S_N"/>
    <property type="match status" value="1"/>
</dbReference>
<dbReference type="SUPFAM" id="SSF56059">
    <property type="entry name" value="Glutathione synthetase ATP-binding domain-like"/>
    <property type="match status" value="1"/>
</dbReference>
<dbReference type="SUPFAM" id="SSF52440">
    <property type="entry name" value="PreATP-grasp domain"/>
    <property type="match status" value="1"/>
</dbReference>
<dbReference type="PROSITE" id="PS50975">
    <property type="entry name" value="ATP_GRASP"/>
    <property type="match status" value="1"/>
</dbReference>
<accession>Q7W910</accession>
<evidence type="ECO:0000250" key="1"/>
<evidence type="ECO:0000255" key="2">
    <source>
        <dbReference type="HAMAP-Rule" id="MF_00162"/>
    </source>
</evidence>